<comment type="function">
    <text evidence="1">Catalyzes the removal of terminal sialic acid residues from viral and cellular glycoconjugates. Cleaves off the terminal sialic acids on the glycosylated HA during virus budding to facilitate virus release. Additionally helps virus spread through the circulation by further removing sialic acids from the cell surface. These cleavages prevent self-aggregation and ensure the efficient spread of the progeny virus from cell to cell. Otherwise, infection would be limited to one round of replication. Described as a receptor-destroying enzyme because it cleaves a terminal sialic acid from the cellular receptors. May facilitate viral invasion of the upper airways by cleaving the sialic acid moieties on the mucin of the airway epithelial cells. Likely to plays a role in the budding process through its association with lipid rafts during intracellular transport. May additionally display a raft-association independent effect on budding. Plays a role in the determination of host range restriction on replication and virulence. Sialidase activity in late endosome/lysosome traffic seems to enhance virus replication.</text>
</comment>
<comment type="catalytic activity">
    <reaction evidence="1">
        <text>Hydrolysis of alpha-(2-&gt;3)-, alpha-(2-&gt;6)-, alpha-(2-&gt;8)- glycosidic linkages of terminal sialic acid residues in oligosaccharides, glycoproteins, glycolipids, colominic acid and synthetic substrates.</text>
        <dbReference type="EC" id="3.2.1.18"/>
    </reaction>
</comment>
<comment type="cofactor">
    <cofactor evidence="1 2 3 4">
        <name>Ca(2+)</name>
        <dbReference type="ChEBI" id="CHEBI:29108"/>
    </cofactor>
    <text evidence="2 3 4">Binds 1 Ca(2+) ion per subunit.</text>
</comment>
<comment type="activity regulation">
    <text evidence="1">Inhibited by the neuraminidase inhibitors zanamivir (Relenza) and oseltamivir (Tamiflu). These drugs interfere with the release of progeny virus from infected cells and are effective against all influenza strains. Resistance to neuraminidase inhibitors is quite rare.</text>
</comment>
<comment type="subunit">
    <text evidence="1 2 3 4">Homotetramer.</text>
</comment>
<comment type="subcellular location">
    <subcellularLocation>
        <location evidence="1">Virion membrane</location>
    </subcellularLocation>
    <subcellularLocation>
        <location evidence="1">Host apical cell membrane</location>
        <topology evidence="1">Single-pass type II membrane protein</topology>
    </subcellularLocation>
    <text evidence="1">Preferentially accumulates at the apical plasma membrane in infected polarized epithelial cells, which is the virus assembly site. Uses lipid rafts for cell surface transport and apical sorting. In the virion, forms a mushroom-shaped spike on the surface of the membrane.</text>
</comment>
<comment type="domain">
    <text evidence="1">Intact N-terminus is essential for virion morphogenesis. Possesses two apical sorting signals, one in the ectodomain, which is likely to be a glycan, and the other in the transmembrane domain. The transmembrane domain also plays a role in lipid raft association.</text>
</comment>
<comment type="PTM">
    <text evidence="1 4">N-glycosylated.</text>
</comment>
<comment type="miscellaneous">
    <text>The influenza B genome consist of 8 RNA segments. Genetic variation of hemagglutinin and/or neuraminidase genes results in the emergence of new influenza strains. The mechanism of variation can be the result of point mutations or the result of genetic reassortment between segments of two different strains.</text>
</comment>
<comment type="similarity">
    <text evidence="1">Belongs to the glycosyl hydrolase 34 family.</text>
</comment>
<evidence type="ECO:0000255" key="1">
    <source>
        <dbReference type="HAMAP-Rule" id="MF_04071"/>
    </source>
</evidence>
<evidence type="ECO:0000269" key="2">
    <source>
    </source>
</evidence>
<evidence type="ECO:0000269" key="3">
    <source>
    </source>
</evidence>
<evidence type="ECO:0000269" key="4">
    <source>
    </source>
</evidence>
<evidence type="ECO:0000269" key="5">
    <source>
    </source>
</evidence>
<evidence type="ECO:0007829" key="6">
    <source>
        <dbReference type="PDB" id="1B9T"/>
    </source>
</evidence>
<evidence type="ECO:0007829" key="7">
    <source>
        <dbReference type="PDB" id="1B9V"/>
    </source>
</evidence>
<evidence type="ECO:0007829" key="8">
    <source>
        <dbReference type="PDB" id="1INV"/>
    </source>
</evidence>
<evidence type="ECO:0007829" key="9">
    <source>
        <dbReference type="PDB" id="1IVB"/>
    </source>
</evidence>
<organism>
    <name type="scientific">Influenza B virus (strain B/Lee/1940)</name>
    <dbReference type="NCBI Taxonomy" id="518987"/>
    <lineage>
        <taxon>Viruses</taxon>
        <taxon>Riboviria</taxon>
        <taxon>Orthornavirae</taxon>
        <taxon>Negarnaviricota</taxon>
        <taxon>Polyploviricotina</taxon>
        <taxon>Insthoviricetes</taxon>
        <taxon>Articulavirales</taxon>
        <taxon>Orthomyxoviridae</taxon>
        <taxon>Betainfluenzavirus</taxon>
        <taxon>Betainfluenzavirus influenzae</taxon>
        <taxon>Influenza B virus</taxon>
    </lineage>
</organism>
<feature type="chain" id="PRO_0000078732" description="Neuraminidase">
    <location>
        <begin position="1"/>
        <end position="466"/>
    </location>
</feature>
<feature type="topological domain" description="Intravirion" evidence="1">
    <location>
        <begin position="1"/>
        <end position="8"/>
    </location>
</feature>
<feature type="transmembrane region" description="Helical" evidence="1">
    <location>
        <begin position="9"/>
        <end position="31"/>
    </location>
</feature>
<feature type="topological domain" description="Virion surface" evidence="1">
    <location>
        <begin position="32"/>
        <end position="466"/>
    </location>
</feature>
<feature type="region of interest" description="Involved in apical transport and lipid raft association" evidence="1">
    <location>
        <begin position="13"/>
        <end position="35"/>
    </location>
</feature>
<feature type="region of interest" description="Hypervariable stalk region" evidence="1">
    <location>
        <begin position="38"/>
        <end position="86"/>
    </location>
</feature>
<feature type="region of interest" description="Head of neuraminidase" evidence="1">
    <location>
        <begin position="89"/>
        <end position="466"/>
    </location>
</feature>
<feature type="active site" description="Proton donor/acceptor" evidence="1">
    <location>
        <position position="149"/>
    </location>
</feature>
<feature type="active site" description="Nucleophile" evidence="1">
    <location>
        <position position="409"/>
    </location>
</feature>
<feature type="binding site" evidence="1">
    <location>
        <position position="116"/>
    </location>
    <ligand>
        <name>substrate</name>
    </ligand>
</feature>
<feature type="binding site" evidence="1">
    <location>
        <position position="150"/>
    </location>
    <ligand>
        <name>substrate</name>
    </ligand>
</feature>
<feature type="binding site" evidence="1">
    <location>
        <begin position="275"/>
        <end position="276"/>
    </location>
    <ligand>
        <name>substrate</name>
    </ligand>
</feature>
<feature type="binding site" evidence="1">
    <location>
        <position position="292"/>
    </location>
    <ligand>
        <name>substrate</name>
    </ligand>
</feature>
<feature type="binding site" evidence="1 2 4">
    <location>
        <position position="293"/>
    </location>
    <ligand>
        <name>Ca(2+)</name>
        <dbReference type="ChEBI" id="CHEBI:29108"/>
    </ligand>
</feature>
<feature type="binding site" evidence="2 4">
    <location>
        <position position="297"/>
    </location>
    <ligand>
        <name>Ca(2+)</name>
        <dbReference type="ChEBI" id="CHEBI:29108"/>
    </ligand>
</feature>
<feature type="binding site" evidence="1 2 4">
    <location>
        <position position="324"/>
    </location>
    <ligand>
        <name>Ca(2+)</name>
        <dbReference type="ChEBI" id="CHEBI:29108"/>
    </ligand>
</feature>
<feature type="binding site" evidence="2 4">
    <location>
        <position position="346"/>
    </location>
    <ligand>
        <name>Ca(2+)</name>
        <dbReference type="ChEBI" id="CHEBI:29108"/>
    </ligand>
</feature>
<feature type="binding site" evidence="1">
    <location>
        <position position="374"/>
    </location>
    <ligand>
        <name>substrate</name>
    </ligand>
</feature>
<feature type="glycosylation site" description="N-linked (GlcNAc...) asparagine; by host" evidence="1">
    <location>
        <position position="56"/>
    </location>
</feature>
<feature type="glycosylation site" description="N-linked (GlcNAc...) asparagine; by host" evidence="1">
    <location>
        <position position="64"/>
    </location>
</feature>
<feature type="glycosylation site" description="N-linked (GlcNAc...) asparagine; by host" evidence="1">
    <location>
        <position position="144"/>
    </location>
</feature>
<feature type="glycosylation site" description="N-linked (GlcNAc...) asparagine; by host" evidence="1">
    <location>
        <position position="284"/>
    </location>
</feature>
<feature type="disulfide bond" evidence="1">
    <location>
        <begin position="87"/>
        <end position="420"/>
    </location>
</feature>
<feature type="disulfide bond" evidence="1">
    <location>
        <begin position="122"/>
        <end position="127"/>
    </location>
</feature>
<feature type="disulfide bond" evidence="1">
    <location>
        <begin position="182"/>
        <end position="229"/>
    </location>
</feature>
<feature type="disulfide bond" evidence="1">
    <location>
        <begin position="231"/>
        <end position="236"/>
    </location>
</feature>
<feature type="disulfide bond" evidence="1">
    <location>
        <begin position="277"/>
        <end position="291"/>
    </location>
</feature>
<feature type="disulfide bond" evidence="1">
    <location>
        <begin position="279"/>
        <end position="289"/>
    </location>
</feature>
<feature type="disulfide bond" evidence="1">
    <location>
        <begin position="318"/>
        <end position="337"/>
    </location>
</feature>
<feature type="disulfide bond" evidence="1">
    <location>
        <begin position="424"/>
        <end position="447"/>
    </location>
</feature>
<feature type="mutagenesis site" description="Reduced substrate binding." evidence="5">
    <original>E</original>
    <variation>G</variation>
    <location>
        <position position="117"/>
    </location>
</feature>
<feature type="mutagenesis site" description="Almost complete loss of enzymatic activity." evidence="5">
    <original>D</original>
    <variation>E</variation>
    <location>
        <position position="149"/>
    </location>
</feature>
<feature type="mutagenesis site" description="Reduced substrate binding." evidence="5">
    <original>R</original>
    <variation>K</variation>
    <location>
        <position position="150"/>
    </location>
</feature>
<feature type="mutagenesis site" description="Reduced substrate binding." evidence="5">
    <original>R</original>
    <variation>K</variation>
    <location>
        <position position="223"/>
    </location>
</feature>
<feature type="mutagenesis site" description="Almost complete loss of enzymatic activity." evidence="5">
    <original>E</original>
    <variation>D</variation>
    <location>
        <position position="275"/>
    </location>
</feature>
<feature type="mutagenesis site" description="80% loss of catalytic efficiency." evidence="5">
    <original>R</original>
    <variation>K</variation>
    <location>
        <position position="374"/>
    </location>
</feature>
<feature type="mutagenesis site" description="94% loss of catalytic efficiency." evidence="5">
    <original>R</original>
    <variation>N</variation>
    <location>
        <position position="374"/>
    </location>
</feature>
<feature type="mutagenesis site" description="Complete loss of enzymatic activity." evidence="5">
    <original>Y</original>
    <variation>F</variation>
    <location>
        <position position="409"/>
    </location>
</feature>
<feature type="strand" evidence="8">
    <location>
        <begin position="88"/>
        <end position="90"/>
    </location>
</feature>
<feature type="strand" evidence="7">
    <location>
        <begin position="92"/>
        <end position="98"/>
    </location>
</feature>
<feature type="helix" evidence="7">
    <location>
        <begin position="100"/>
        <end position="102"/>
    </location>
</feature>
<feature type="strand" evidence="6">
    <location>
        <begin position="106"/>
        <end position="108"/>
    </location>
</feature>
<feature type="strand" evidence="7">
    <location>
        <begin position="119"/>
        <end position="122"/>
    </location>
</feature>
<feature type="strand" evidence="7">
    <location>
        <begin position="127"/>
        <end position="133"/>
    </location>
</feature>
<feature type="strand" evidence="7">
    <location>
        <begin position="137"/>
        <end position="139"/>
    </location>
</feature>
<feature type="turn" evidence="7">
    <location>
        <begin position="144"/>
        <end position="147"/>
    </location>
</feature>
<feature type="strand" evidence="7">
    <location>
        <begin position="155"/>
        <end position="160"/>
    </location>
</feature>
<feature type="turn" evidence="7">
    <location>
        <begin position="167"/>
        <end position="169"/>
    </location>
</feature>
<feature type="strand" evidence="7">
    <location>
        <begin position="171"/>
        <end position="175"/>
    </location>
</feature>
<feature type="strand" evidence="7">
    <location>
        <begin position="177"/>
        <end position="183"/>
    </location>
</feature>
<feature type="strand" evidence="7">
    <location>
        <begin position="185"/>
        <end position="195"/>
    </location>
</feature>
<feature type="turn" evidence="7">
    <location>
        <begin position="197"/>
        <end position="199"/>
    </location>
</feature>
<feature type="strand" evidence="7">
    <location>
        <begin position="201"/>
        <end position="206"/>
    </location>
</feature>
<feature type="strand" evidence="7">
    <location>
        <begin position="209"/>
        <end position="215"/>
    </location>
</feature>
<feature type="strand" evidence="7">
    <location>
        <begin position="217"/>
        <end position="220"/>
    </location>
</feature>
<feature type="strand" evidence="9">
    <location>
        <begin position="226"/>
        <end position="228"/>
    </location>
</feature>
<feature type="strand" evidence="7">
    <location>
        <begin position="230"/>
        <end position="232"/>
    </location>
</feature>
<feature type="strand" evidence="7">
    <location>
        <begin position="235"/>
        <end position="241"/>
    </location>
</feature>
<feature type="strand" evidence="6">
    <location>
        <begin position="245"/>
        <end position="247"/>
    </location>
</feature>
<feature type="strand" evidence="7">
    <location>
        <begin position="251"/>
        <end position="257"/>
    </location>
</feature>
<feature type="strand" evidence="7">
    <location>
        <begin position="260"/>
        <end position="265"/>
    </location>
</feature>
<feature type="strand" evidence="7">
    <location>
        <begin position="268"/>
        <end position="270"/>
    </location>
</feature>
<feature type="strand" evidence="7">
    <location>
        <begin position="275"/>
        <end position="292"/>
    </location>
</feature>
<feature type="strand" evidence="7">
    <location>
        <begin position="294"/>
        <end position="296"/>
    </location>
</feature>
<feature type="strand" evidence="7">
    <location>
        <begin position="301"/>
        <end position="306"/>
    </location>
</feature>
<feature type="turn" evidence="7">
    <location>
        <begin position="307"/>
        <end position="310"/>
    </location>
</feature>
<feature type="strand" evidence="7">
    <location>
        <begin position="311"/>
        <end position="316"/>
    </location>
</feature>
<feature type="strand" evidence="7">
    <location>
        <begin position="324"/>
        <end position="326"/>
    </location>
</feature>
<feature type="strand" evidence="7">
    <location>
        <begin position="352"/>
        <end position="356"/>
    </location>
</feature>
<feature type="strand" evidence="7">
    <location>
        <begin position="361"/>
        <end position="367"/>
    </location>
</feature>
<feature type="strand" evidence="7">
    <location>
        <begin position="369"/>
        <end position="385"/>
    </location>
</feature>
<feature type="turn" evidence="7">
    <location>
        <begin position="387"/>
        <end position="389"/>
    </location>
</feature>
<feature type="strand" evidence="7">
    <location>
        <begin position="395"/>
        <end position="406"/>
    </location>
</feature>
<feature type="strand" evidence="7">
    <location>
        <begin position="410"/>
        <end position="416"/>
    </location>
</feature>
<feature type="strand" evidence="7">
    <location>
        <begin position="418"/>
        <end position="432"/>
    </location>
</feature>
<feature type="strand" evidence="7">
    <location>
        <begin position="435"/>
        <end position="437"/>
    </location>
</feature>
<feature type="strand" evidence="7">
    <location>
        <begin position="439"/>
        <end position="448"/>
    </location>
</feature>
<feature type="strand" evidence="7">
    <location>
        <begin position="450"/>
        <end position="452"/>
    </location>
</feature>
<keyword id="KW-0002">3D-structure</keyword>
<keyword id="KW-0106">Calcium</keyword>
<keyword id="KW-1015">Disulfide bond</keyword>
<keyword id="KW-0325">Glycoprotein</keyword>
<keyword id="KW-0326">Glycosidase</keyword>
<keyword id="KW-1032">Host cell membrane</keyword>
<keyword id="KW-1043">Host membrane</keyword>
<keyword id="KW-0378">Hydrolase</keyword>
<keyword id="KW-0472">Membrane</keyword>
<keyword id="KW-0479">Metal-binding</keyword>
<keyword id="KW-1185">Reference proteome</keyword>
<keyword id="KW-0735">Signal-anchor</keyword>
<keyword id="KW-0812">Transmembrane</keyword>
<keyword id="KW-1133">Transmembrane helix</keyword>
<keyword id="KW-0946">Virion</keyword>
<name>NRAM_INBLE</name>
<gene>
    <name evidence="1" type="primary">NA</name>
</gene>
<accession>P03474</accession>
<organismHost>
    <name type="scientific">Homo sapiens</name>
    <name type="common">Human</name>
    <dbReference type="NCBI Taxonomy" id="9606"/>
</organismHost>
<dbReference type="EC" id="3.2.1.18" evidence="1"/>
<dbReference type="EMBL" id="J02095">
    <property type="protein sequence ID" value="AAA43749.1"/>
    <property type="molecule type" value="Genomic_RNA"/>
</dbReference>
<dbReference type="PIR" id="A00886">
    <property type="entry name" value="NMIV4"/>
</dbReference>
<dbReference type="RefSeq" id="NP_056663.1">
    <property type="nucleotide sequence ID" value="NC_002209.1"/>
</dbReference>
<dbReference type="PDB" id="1B9S">
    <property type="method" value="X-ray"/>
    <property type="resolution" value="2.50 A"/>
    <property type="chains" value="A=77-466"/>
</dbReference>
<dbReference type="PDB" id="1B9T">
    <property type="method" value="X-ray"/>
    <property type="resolution" value="2.40 A"/>
    <property type="chains" value="A=77-466"/>
</dbReference>
<dbReference type="PDB" id="1B9V">
    <property type="method" value="X-ray"/>
    <property type="resolution" value="2.35 A"/>
    <property type="chains" value="A=77-466"/>
</dbReference>
<dbReference type="PDB" id="1INF">
    <property type="method" value="X-ray"/>
    <property type="resolution" value="2.40 A"/>
    <property type="chains" value="A=77-466"/>
</dbReference>
<dbReference type="PDB" id="1INV">
    <property type="method" value="X-ray"/>
    <property type="resolution" value="2.40 A"/>
    <property type="chains" value="A=77-466"/>
</dbReference>
<dbReference type="PDB" id="1IVB">
    <property type="method" value="X-ray"/>
    <property type="resolution" value="2.40 A"/>
    <property type="chains" value="A=77-466"/>
</dbReference>
<dbReference type="PDB" id="1VCJ">
    <property type="method" value="X-ray"/>
    <property type="resolution" value="2.40 A"/>
    <property type="chains" value="A=78-466"/>
</dbReference>
<dbReference type="PDBsum" id="1B9S"/>
<dbReference type="PDBsum" id="1B9T"/>
<dbReference type="PDBsum" id="1B9V"/>
<dbReference type="PDBsum" id="1INF"/>
<dbReference type="PDBsum" id="1INV"/>
<dbReference type="PDBsum" id="1IVB"/>
<dbReference type="PDBsum" id="1VCJ"/>
<dbReference type="SMR" id="P03474"/>
<dbReference type="BindingDB" id="P03474"/>
<dbReference type="ChEMBL" id="CHEMBL3377"/>
<dbReference type="DrugBank" id="DB03475">
    <property type="generic name" value="1-[4-Carboxy-2-(3-Pentylamino)Phenyl]-5,5'-Di(Hydroxymethyl)Pyrrolidin-2-One"/>
</dbReference>
<dbReference type="DrugBank" id="DB03342">
    <property type="generic name" value="4-(Acetylamino)-3-Guanidinobenzoic Acid"/>
</dbReference>
<dbReference type="DrugBank" id="DB08570">
    <property type="generic name" value="4-(ACETYLAMINO)-3-HYDROXY-5-NITROBENZOIC ACID"/>
</dbReference>
<dbReference type="DrugBank" id="DB07762">
    <property type="generic name" value="4-(N-ACETYLAMINO)-3-[N-(2-ETHYLBUTANOYLAMINO)]BENZOIC ACID"/>
</dbReference>
<dbReference type="DrugCentral" id="P03474"/>
<dbReference type="CAZy" id="GH34">
    <property type="family name" value="Glycoside Hydrolase Family 34"/>
</dbReference>
<dbReference type="GlyCosmos" id="P03474">
    <property type="glycosylation" value="4 sites, No reported glycans"/>
</dbReference>
<dbReference type="ABCD" id="P03474">
    <property type="antibodies" value="1 sequenced antibody"/>
</dbReference>
<dbReference type="GeneID" id="26824004"/>
<dbReference type="KEGG" id="vg:26824004"/>
<dbReference type="OrthoDB" id="2789at10239"/>
<dbReference type="SABIO-RK" id="P03474"/>
<dbReference type="EvolutionaryTrace" id="P03474"/>
<dbReference type="PRO" id="PR:P03474"/>
<dbReference type="Proteomes" id="UP000008158">
    <property type="component" value="Genome"/>
</dbReference>
<dbReference type="GO" id="GO:0020002">
    <property type="term" value="C:host cell plasma membrane"/>
    <property type="evidence" value="ECO:0007669"/>
    <property type="project" value="UniProtKB-SubCell"/>
</dbReference>
<dbReference type="GO" id="GO:0016020">
    <property type="term" value="C:membrane"/>
    <property type="evidence" value="ECO:0007669"/>
    <property type="project" value="UniProtKB-UniRule"/>
</dbReference>
<dbReference type="GO" id="GO:0055036">
    <property type="term" value="C:virion membrane"/>
    <property type="evidence" value="ECO:0007669"/>
    <property type="project" value="UniProtKB-SubCell"/>
</dbReference>
<dbReference type="GO" id="GO:0004308">
    <property type="term" value="F:exo-alpha-sialidase activity"/>
    <property type="evidence" value="ECO:0007669"/>
    <property type="project" value="UniProtKB-UniRule"/>
</dbReference>
<dbReference type="GO" id="GO:0046872">
    <property type="term" value="F:metal ion binding"/>
    <property type="evidence" value="ECO:0007669"/>
    <property type="project" value="UniProtKB-UniRule"/>
</dbReference>
<dbReference type="GO" id="GO:0005975">
    <property type="term" value="P:carbohydrate metabolic process"/>
    <property type="evidence" value="ECO:0007669"/>
    <property type="project" value="InterPro"/>
</dbReference>
<dbReference type="GO" id="GO:0046761">
    <property type="term" value="P:viral budding from plasma membrane"/>
    <property type="evidence" value="ECO:0007669"/>
    <property type="project" value="UniProtKB-UniRule"/>
</dbReference>
<dbReference type="Gene3D" id="2.120.10.10">
    <property type="match status" value="1"/>
</dbReference>
<dbReference type="HAMAP" id="MF_04071">
    <property type="entry name" value="INFV_NRAM"/>
    <property type="match status" value="1"/>
</dbReference>
<dbReference type="InterPro" id="IPR001860">
    <property type="entry name" value="Glyco_hydro_34"/>
</dbReference>
<dbReference type="InterPro" id="IPR036278">
    <property type="entry name" value="Sialidase_sf"/>
</dbReference>
<dbReference type="Pfam" id="PF00064">
    <property type="entry name" value="Neur"/>
    <property type="match status" value="1"/>
</dbReference>
<dbReference type="SUPFAM" id="SSF50939">
    <property type="entry name" value="Sialidases"/>
    <property type="match status" value="1"/>
</dbReference>
<sequence>MLPSTVQTLTLLLTSGGVLLSLYVSASLSYLLYSDVLLKFSSTKTTAPTMSLECTNASNAQTVNHSATKEMTFPPPEPEWTYPRLSCQGSTFQKALLISPHRFGEIKGNSAPLIIREPFVACGPKECRHFALTHYAAQPGGYYNGTRKDRNKLRHLVSVKLGKIPTVENSIFHMAAWSGSACHDGREWTYIGVDGPDNDALVKIKYGEAYTDTYHSYAHNILRTQESACNCIGGDCYLMITDGSASGISKCRFLKIREGRIIKEILPTGRVEHTEECTCGFASNKTIECACRDNSYTAKRPFVKLNVETDTAEIRLMCTKTYLDTPRPDDGSIAGPCESNGDKWLGGIKGGFVHQRMASKIGRWYSRTMSKTNRMGMELYVKYDGDPWTDSDALTLSGVMVSIEEPGWYSFGFEIKDKKCDVPCIGIEMVHDGGKDTWHSAATAIYCLMGSGQLLWDTVTGVDMAL</sequence>
<reference key="1">
    <citation type="journal article" date="1982" name="Proc. Natl. Acad. Sci. U.S.A.">
        <title>Complete nucleotide sequence of the neuraminidase gene of influenza B virus.</title>
        <authorList>
            <person name="Shaw M.W."/>
            <person name="Lamb R.A."/>
            <person name="Erickson B.W."/>
            <person name="Briedis D.J."/>
            <person name="Choppin P.W."/>
        </authorList>
    </citation>
    <scope>NUCLEOTIDE SEQUENCE [GENOMIC RNA]</scope>
</reference>
<reference key="2">
    <citation type="journal article" date="1998" name="Eur. J. Biochem.">
        <title>Site-directed mutagenesis of catalytic residues of influenza virus neuraminidase as an aid to drug design.</title>
        <authorList>
            <person name="Ghate A.A."/>
            <person name="Air G.M."/>
        </authorList>
    </citation>
    <scope>MUTAGENESIS OF GLU-117; ASP-149; ARG-150; ARG-223; GLU-275; ARG-374 AND TYR-409</scope>
</reference>
<reference key="3">
    <citation type="journal article" date="2005" name="N. Engl. J. Med.">
        <title>Neuraminidase inhibitors for influenza.</title>
        <authorList>
            <person name="Moscona A."/>
        </authorList>
    </citation>
    <scope>REVIEW</scope>
</reference>
<reference key="4">
    <citation type="journal article" date="1995" name="Biochemistry">
        <title>Structures of aromatic inhibitors of influenza virus neuraminidase.</title>
        <authorList>
            <person name="Jedrzejas M.J."/>
            <person name="Singh S."/>
            <person name="Brouillette W.J."/>
            <person name="Laver W.G."/>
            <person name="Air G.M."/>
            <person name="Luo M."/>
        </authorList>
    </citation>
    <scope>X-RAY CRYSTALLOGRAPHY (2.40 ANGSTROMS) OF 77-466 IN COMPLEX WITH SYNTHETIC INHIBITOR AND CALCIUM</scope>
    <scope>SUBUNIT</scope>
    <scope>COFACTOR</scope>
    <scope>GLYCOSYLATION AT ASN-284</scope>
</reference>
<reference key="5">
    <citation type="journal article" date="1999" name="J. Mol. Biol.">
        <title>Novel aromatic inhibitors of influenza virus neuraminidase make selective interactions with conserved residues and water molecules in the active site.</title>
        <authorList>
            <person name="Finley J.B."/>
            <person name="Atigadda V.R."/>
            <person name="Duarte F."/>
            <person name="Zhao J.J."/>
            <person name="Brouillette W.J."/>
            <person name="Air G.M."/>
            <person name="Luo M."/>
        </authorList>
    </citation>
    <scope>X-RAY CRYSTALLOGRAPHY (2.35 ANGSTROMS) OF 77-466 IN COMPLEX WITH SYNTHETIC INHIBITOR AND CALCIUM</scope>
    <scope>SUBUNIT</scope>
    <scope>COFACTOR</scope>
</reference>
<reference key="6">
    <citation type="journal article" date="2004" name="Acta Crystallogr. D">
        <title>A benzoic acid inhibitor induces a novel conformational change in the active site of Influenza B virus neuraminidase.</title>
        <authorList>
            <person name="Lommer B.S."/>
            <person name="Ali S.M."/>
            <person name="Bajpai S.N."/>
            <person name="Brouillette W.J."/>
            <person name="Air G.M."/>
            <person name="Luo M."/>
        </authorList>
    </citation>
    <scope>X-RAY CRYSTALLOGRAPHY (2.4 ANGSTROMS) OF 78-466 IN COMPLEX WITH SYNTHETIC INHIBITOR</scope>
    <scope>SUBUNIT</scope>
    <scope>COFACTOR</scope>
</reference>
<protein>
    <recommendedName>
        <fullName evidence="1">Neuraminidase</fullName>
        <ecNumber evidence="1">3.2.1.18</ecNumber>
    </recommendedName>
</protein>
<proteinExistence type="evidence at protein level"/>